<gene>
    <name type="primary">rluB</name>
    <name type="ordered locus">VC_1179</name>
</gene>
<proteinExistence type="inferred from homology"/>
<sequence>MSEKLQKVLARAGHGSRRELEALIRAGRVSVNGKVAVLGERLEDDNAVVRIDGHVVSVKAQEEVICRVLAYYKPEGELCTRHDPEGRRTVFDRLPKIRGSRWISVGRLDANTSGLLLFTTDGELANRLMHPSRQVEREYLVRVFGDVTEEKVRNLVRGVQLEDGMARFEDVMYAGGEGINHTFYVVINEGRNREVRRLWESQGTTVSRLKRVRYGDIFLDKKLPRGGWMELDLKQVNYLRELVELRPEKETVLNMAPDAATRKRERTRSQKIRRAVRRHEERISATPGRSGKAPARRKPGGESSTRNKVANQQQSSRKPRG</sequence>
<protein>
    <recommendedName>
        <fullName>Ribosomal large subunit pseudouridine synthase B</fullName>
        <ecNumber>5.4.99.22</ecNumber>
    </recommendedName>
    <alternativeName>
        <fullName>23S rRNA pseudouridine(2605) synthase</fullName>
    </alternativeName>
    <alternativeName>
        <fullName>rRNA pseudouridylate synthase B</fullName>
    </alternativeName>
    <alternativeName>
        <fullName>rRNA-uridine isomerase B</fullName>
    </alternativeName>
</protein>
<organism>
    <name type="scientific">Vibrio cholerae serotype O1 (strain ATCC 39315 / El Tor Inaba N16961)</name>
    <dbReference type="NCBI Taxonomy" id="243277"/>
    <lineage>
        <taxon>Bacteria</taxon>
        <taxon>Pseudomonadati</taxon>
        <taxon>Pseudomonadota</taxon>
        <taxon>Gammaproteobacteria</taxon>
        <taxon>Vibrionales</taxon>
        <taxon>Vibrionaceae</taxon>
        <taxon>Vibrio</taxon>
    </lineage>
</organism>
<reference key="1">
    <citation type="journal article" date="2000" name="Nature">
        <title>DNA sequence of both chromosomes of the cholera pathogen Vibrio cholerae.</title>
        <authorList>
            <person name="Heidelberg J.F."/>
            <person name="Eisen J.A."/>
            <person name="Nelson W.C."/>
            <person name="Clayton R.A."/>
            <person name="Gwinn M.L."/>
            <person name="Dodson R.J."/>
            <person name="Haft D.H."/>
            <person name="Hickey E.K."/>
            <person name="Peterson J.D."/>
            <person name="Umayam L.A."/>
            <person name="Gill S.R."/>
            <person name="Nelson K.E."/>
            <person name="Read T.D."/>
            <person name="Tettelin H."/>
            <person name="Richardson D.L."/>
            <person name="Ermolaeva M.D."/>
            <person name="Vamathevan J.J."/>
            <person name="Bass S."/>
            <person name="Qin H."/>
            <person name="Dragoi I."/>
            <person name="Sellers P."/>
            <person name="McDonald L.A."/>
            <person name="Utterback T.R."/>
            <person name="Fleischmann R.D."/>
            <person name="Nierman W.C."/>
            <person name="White O."/>
            <person name="Salzberg S.L."/>
            <person name="Smith H.O."/>
            <person name="Colwell R.R."/>
            <person name="Mekalanos J.J."/>
            <person name="Venter J.C."/>
            <person name="Fraser C.M."/>
        </authorList>
    </citation>
    <scope>NUCLEOTIDE SEQUENCE [LARGE SCALE GENOMIC DNA]</scope>
    <source>
        <strain>ATCC 39315 / El Tor Inaba N16961</strain>
    </source>
</reference>
<name>RLUB_VIBCH</name>
<dbReference type="EC" id="5.4.99.22"/>
<dbReference type="EMBL" id="AE003852">
    <property type="protein sequence ID" value="AAF94338.1"/>
    <property type="molecule type" value="Genomic_DNA"/>
</dbReference>
<dbReference type="PIR" id="H82230">
    <property type="entry name" value="H82230"/>
</dbReference>
<dbReference type="RefSeq" id="NP_230824.1">
    <property type="nucleotide sequence ID" value="NC_002505.1"/>
</dbReference>
<dbReference type="RefSeq" id="WP_001291245.1">
    <property type="nucleotide sequence ID" value="NZ_LT906614.1"/>
</dbReference>
<dbReference type="SMR" id="Q9KSS7"/>
<dbReference type="STRING" id="243277.VC_1179"/>
<dbReference type="DNASU" id="2614612"/>
<dbReference type="EnsemblBacteria" id="AAF94338">
    <property type="protein sequence ID" value="AAF94338"/>
    <property type="gene ID" value="VC_1179"/>
</dbReference>
<dbReference type="GeneID" id="69720132"/>
<dbReference type="KEGG" id="vch:VC_1179"/>
<dbReference type="PATRIC" id="fig|243277.26.peg.1127"/>
<dbReference type="eggNOG" id="COG1187">
    <property type="taxonomic scope" value="Bacteria"/>
</dbReference>
<dbReference type="HOGENOM" id="CLU_024979_1_1_6"/>
<dbReference type="Proteomes" id="UP000000584">
    <property type="component" value="Chromosome 1"/>
</dbReference>
<dbReference type="GO" id="GO:0160139">
    <property type="term" value="F:23S rRNA pseudouridine(2605) synthase activity"/>
    <property type="evidence" value="ECO:0007669"/>
    <property type="project" value="UniProtKB-EC"/>
</dbReference>
<dbReference type="GO" id="GO:0003723">
    <property type="term" value="F:RNA binding"/>
    <property type="evidence" value="ECO:0007669"/>
    <property type="project" value="UniProtKB-KW"/>
</dbReference>
<dbReference type="GO" id="GO:0000455">
    <property type="term" value="P:enzyme-directed rRNA pseudouridine synthesis"/>
    <property type="evidence" value="ECO:0007669"/>
    <property type="project" value="UniProtKB-ARBA"/>
</dbReference>
<dbReference type="CDD" id="cd02556">
    <property type="entry name" value="PseudoU_synth_RluB"/>
    <property type="match status" value="1"/>
</dbReference>
<dbReference type="CDD" id="cd00165">
    <property type="entry name" value="S4"/>
    <property type="match status" value="1"/>
</dbReference>
<dbReference type="FunFam" id="3.10.290.10:FF:000003">
    <property type="entry name" value="Pseudouridine synthase"/>
    <property type="match status" value="1"/>
</dbReference>
<dbReference type="FunFam" id="3.30.2350.10:FF:000002">
    <property type="entry name" value="Pseudouridine synthase"/>
    <property type="match status" value="1"/>
</dbReference>
<dbReference type="FunFam" id="3.30.70.1560:FF:000001">
    <property type="entry name" value="Pseudouridine synthase"/>
    <property type="match status" value="1"/>
</dbReference>
<dbReference type="FunFam" id="3.30.70.580:FF:000009">
    <property type="entry name" value="Pseudouridine synthase"/>
    <property type="match status" value="1"/>
</dbReference>
<dbReference type="Gene3D" id="3.30.2350.10">
    <property type="entry name" value="Pseudouridine synthase"/>
    <property type="match status" value="1"/>
</dbReference>
<dbReference type="Gene3D" id="3.10.290.10">
    <property type="entry name" value="RNA-binding S4 domain"/>
    <property type="match status" value="1"/>
</dbReference>
<dbReference type="InterPro" id="IPR020103">
    <property type="entry name" value="PsdUridine_synth_cat_dom_sf"/>
</dbReference>
<dbReference type="InterPro" id="IPR006145">
    <property type="entry name" value="PsdUridine_synth_RsuA/RluA"/>
</dbReference>
<dbReference type="InterPro" id="IPR000748">
    <property type="entry name" value="PsdUridine_synth_RsuA/RluB/E/F"/>
</dbReference>
<dbReference type="InterPro" id="IPR018496">
    <property type="entry name" value="PsdUridine_synth_RsuA/RluB_CS"/>
</dbReference>
<dbReference type="InterPro" id="IPR050343">
    <property type="entry name" value="RsuA_PseudoU_synthase"/>
</dbReference>
<dbReference type="InterPro" id="IPR002942">
    <property type="entry name" value="S4_RNA-bd"/>
</dbReference>
<dbReference type="InterPro" id="IPR036986">
    <property type="entry name" value="S4_RNA-bd_sf"/>
</dbReference>
<dbReference type="NCBIfam" id="NF007976">
    <property type="entry name" value="PRK10700.1"/>
    <property type="match status" value="1"/>
</dbReference>
<dbReference type="NCBIfam" id="TIGR00093">
    <property type="entry name" value="pseudouridine synthase"/>
    <property type="match status" value="1"/>
</dbReference>
<dbReference type="PANTHER" id="PTHR47683">
    <property type="entry name" value="PSEUDOURIDINE SYNTHASE FAMILY PROTEIN-RELATED"/>
    <property type="match status" value="1"/>
</dbReference>
<dbReference type="PANTHER" id="PTHR47683:SF3">
    <property type="entry name" value="RIBOSOMAL LARGE SUBUNIT PSEUDOURIDINE SYNTHASE B"/>
    <property type="match status" value="1"/>
</dbReference>
<dbReference type="Pfam" id="PF00849">
    <property type="entry name" value="PseudoU_synth_2"/>
    <property type="match status" value="1"/>
</dbReference>
<dbReference type="Pfam" id="PF01479">
    <property type="entry name" value="S4"/>
    <property type="match status" value="1"/>
</dbReference>
<dbReference type="SMART" id="SM00363">
    <property type="entry name" value="S4"/>
    <property type="match status" value="1"/>
</dbReference>
<dbReference type="SUPFAM" id="SSF55174">
    <property type="entry name" value="Alpha-L RNA-binding motif"/>
    <property type="match status" value="1"/>
</dbReference>
<dbReference type="SUPFAM" id="SSF55120">
    <property type="entry name" value="Pseudouridine synthase"/>
    <property type="match status" value="1"/>
</dbReference>
<dbReference type="PROSITE" id="PS01149">
    <property type="entry name" value="PSI_RSU"/>
    <property type="match status" value="1"/>
</dbReference>
<dbReference type="PROSITE" id="PS50889">
    <property type="entry name" value="S4"/>
    <property type="match status" value="1"/>
</dbReference>
<feature type="chain" id="PRO_0000099992" description="Ribosomal large subunit pseudouridine synthase B">
    <location>
        <begin position="1"/>
        <end position="321"/>
    </location>
</feature>
<feature type="domain" description="S4 RNA-binding" evidence="2">
    <location>
        <begin position="3"/>
        <end position="68"/>
    </location>
</feature>
<feature type="region of interest" description="Disordered" evidence="3">
    <location>
        <begin position="254"/>
        <end position="321"/>
    </location>
</feature>
<feature type="compositionally biased region" description="Basic residues" evidence="3">
    <location>
        <begin position="263"/>
        <end position="277"/>
    </location>
</feature>
<feature type="compositionally biased region" description="Polar residues" evidence="3">
    <location>
        <begin position="302"/>
        <end position="321"/>
    </location>
</feature>
<feature type="active site" description="Nucleophile" evidence="1">
    <location>
        <position position="109"/>
    </location>
</feature>
<keyword id="KW-0413">Isomerase</keyword>
<keyword id="KW-1185">Reference proteome</keyword>
<keyword id="KW-0694">RNA-binding</keyword>
<keyword id="KW-0698">rRNA processing</keyword>
<comment type="function">
    <text evidence="1">Responsible for synthesis of pseudouridine from uracil-2605 in 23S ribosomal RNA.</text>
</comment>
<comment type="catalytic activity">
    <reaction>
        <text>uridine(2605) in 23S rRNA = pseudouridine(2605) in 23S rRNA</text>
        <dbReference type="Rhea" id="RHEA:42520"/>
        <dbReference type="Rhea" id="RHEA-COMP:10095"/>
        <dbReference type="Rhea" id="RHEA-COMP:10096"/>
        <dbReference type="ChEBI" id="CHEBI:65314"/>
        <dbReference type="ChEBI" id="CHEBI:65315"/>
        <dbReference type="EC" id="5.4.99.22"/>
    </reaction>
</comment>
<comment type="similarity">
    <text evidence="4">Belongs to the pseudouridine synthase RsuA family.</text>
</comment>
<accession>Q9KSS7</accession>
<evidence type="ECO:0000250" key="1"/>
<evidence type="ECO:0000255" key="2">
    <source>
        <dbReference type="PROSITE-ProRule" id="PRU00182"/>
    </source>
</evidence>
<evidence type="ECO:0000256" key="3">
    <source>
        <dbReference type="SAM" id="MobiDB-lite"/>
    </source>
</evidence>
<evidence type="ECO:0000305" key="4"/>